<gene>
    <name type="primary">yobT</name>
    <name type="ordered locus">BSU19080</name>
</gene>
<reference key="1">
    <citation type="submission" date="1997-11" db="EMBL/GenBank/DDBJ databases">
        <title>Sequence analysis of the Bacillus subtilis chromosome region between the terC and odhAB loci cloned in a yeast artificial chromosome.</title>
        <authorList>
            <person name="Lapidus A."/>
            <person name="Galleron N."/>
            <person name="Sorokin A."/>
            <person name="Ehrlich S.D."/>
        </authorList>
    </citation>
    <scope>NUCLEOTIDE SEQUENCE [GENOMIC DNA]</scope>
</reference>
<reference key="2">
    <citation type="journal article" date="1997" name="Nature">
        <title>The complete genome sequence of the Gram-positive bacterium Bacillus subtilis.</title>
        <authorList>
            <person name="Kunst F."/>
            <person name="Ogasawara N."/>
            <person name="Moszer I."/>
            <person name="Albertini A.M."/>
            <person name="Alloni G."/>
            <person name="Azevedo V."/>
            <person name="Bertero M.G."/>
            <person name="Bessieres P."/>
            <person name="Bolotin A."/>
            <person name="Borchert S."/>
            <person name="Borriss R."/>
            <person name="Boursier L."/>
            <person name="Brans A."/>
            <person name="Braun M."/>
            <person name="Brignell S.C."/>
            <person name="Bron S."/>
            <person name="Brouillet S."/>
            <person name="Bruschi C.V."/>
            <person name="Caldwell B."/>
            <person name="Capuano V."/>
            <person name="Carter N.M."/>
            <person name="Choi S.-K."/>
            <person name="Codani J.-J."/>
            <person name="Connerton I.F."/>
            <person name="Cummings N.J."/>
            <person name="Daniel R.A."/>
            <person name="Denizot F."/>
            <person name="Devine K.M."/>
            <person name="Duesterhoeft A."/>
            <person name="Ehrlich S.D."/>
            <person name="Emmerson P.T."/>
            <person name="Entian K.-D."/>
            <person name="Errington J."/>
            <person name="Fabret C."/>
            <person name="Ferrari E."/>
            <person name="Foulger D."/>
            <person name="Fritz C."/>
            <person name="Fujita M."/>
            <person name="Fujita Y."/>
            <person name="Fuma S."/>
            <person name="Galizzi A."/>
            <person name="Galleron N."/>
            <person name="Ghim S.-Y."/>
            <person name="Glaser P."/>
            <person name="Goffeau A."/>
            <person name="Golightly E.J."/>
            <person name="Grandi G."/>
            <person name="Guiseppi G."/>
            <person name="Guy B.J."/>
            <person name="Haga K."/>
            <person name="Haiech J."/>
            <person name="Harwood C.R."/>
            <person name="Henaut A."/>
            <person name="Hilbert H."/>
            <person name="Holsappel S."/>
            <person name="Hosono S."/>
            <person name="Hullo M.-F."/>
            <person name="Itaya M."/>
            <person name="Jones L.-M."/>
            <person name="Joris B."/>
            <person name="Karamata D."/>
            <person name="Kasahara Y."/>
            <person name="Klaerr-Blanchard M."/>
            <person name="Klein C."/>
            <person name="Kobayashi Y."/>
            <person name="Koetter P."/>
            <person name="Koningstein G."/>
            <person name="Krogh S."/>
            <person name="Kumano M."/>
            <person name="Kurita K."/>
            <person name="Lapidus A."/>
            <person name="Lardinois S."/>
            <person name="Lauber J."/>
            <person name="Lazarevic V."/>
            <person name="Lee S.-M."/>
            <person name="Levine A."/>
            <person name="Liu H."/>
            <person name="Masuda S."/>
            <person name="Mauel C."/>
            <person name="Medigue C."/>
            <person name="Medina N."/>
            <person name="Mellado R.P."/>
            <person name="Mizuno M."/>
            <person name="Moestl D."/>
            <person name="Nakai S."/>
            <person name="Noback M."/>
            <person name="Noone D."/>
            <person name="O'Reilly M."/>
            <person name="Ogawa K."/>
            <person name="Ogiwara A."/>
            <person name="Oudega B."/>
            <person name="Park S.-H."/>
            <person name="Parro V."/>
            <person name="Pohl T.M."/>
            <person name="Portetelle D."/>
            <person name="Porwollik S."/>
            <person name="Prescott A.M."/>
            <person name="Presecan E."/>
            <person name="Pujic P."/>
            <person name="Purnelle B."/>
            <person name="Rapoport G."/>
            <person name="Rey M."/>
            <person name="Reynolds S."/>
            <person name="Rieger M."/>
            <person name="Rivolta C."/>
            <person name="Rocha E."/>
            <person name="Roche B."/>
            <person name="Rose M."/>
            <person name="Sadaie Y."/>
            <person name="Sato T."/>
            <person name="Scanlan E."/>
            <person name="Schleich S."/>
            <person name="Schroeter R."/>
            <person name="Scoffone F."/>
            <person name="Sekiguchi J."/>
            <person name="Sekowska A."/>
            <person name="Seror S.J."/>
            <person name="Serror P."/>
            <person name="Shin B.-S."/>
            <person name="Soldo B."/>
            <person name="Sorokin A."/>
            <person name="Tacconi E."/>
            <person name="Takagi T."/>
            <person name="Takahashi H."/>
            <person name="Takemaru K."/>
            <person name="Takeuchi M."/>
            <person name="Tamakoshi A."/>
            <person name="Tanaka T."/>
            <person name="Terpstra P."/>
            <person name="Tognoni A."/>
            <person name="Tosato V."/>
            <person name="Uchiyama S."/>
            <person name="Vandenbol M."/>
            <person name="Vannier F."/>
            <person name="Vassarotti A."/>
            <person name="Viari A."/>
            <person name="Wambutt R."/>
            <person name="Wedler E."/>
            <person name="Wedler H."/>
            <person name="Weitzenegger T."/>
            <person name="Winters P."/>
            <person name="Wipat A."/>
            <person name="Yamamoto H."/>
            <person name="Yamane K."/>
            <person name="Yasumoto K."/>
            <person name="Yata K."/>
            <person name="Yoshida K."/>
            <person name="Yoshikawa H.-F."/>
            <person name="Zumstein E."/>
            <person name="Yoshikawa H."/>
            <person name="Danchin A."/>
        </authorList>
    </citation>
    <scope>NUCLEOTIDE SEQUENCE [LARGE SCALE GENOMIC DNA]</scope>
    <source>
        <strain>168</strain>
    </source>
</reference>
<proteinExistence type="inferred from homology"/>
<evidence type="ECO:0000250" key="1">
    <source>
        <dbReference type="UniProtKB" id="Q16775"/>
    </source>
</evidence>
<evidence type="ECO:0000305" key="2"/>
<comment type="cofactor">
    <cofactor evidence="1">
        <name>Zn(2+)</name>
        <dbReference type="ChEBI" id="CHEBI:29105"/>
    </cofactor>
    <text evidence="1">Binds 2 Zn(2+) ions per subunit.</text>
</comment>
<comment type="similarity">
    <text evidence="2">Belongs to the metallo-beta-lactamase superfamily. Glyoxalase II family.</text>
</comment>
<feature type="chain" id="PRO_0000360794" description="Uncharacterized protein YobT">
    <location>
        <begin position="1"/>
        <end position="233"/>
    </location>
</feature>
<feature type="binding site" evidence="1">
    <location>
        <position position="64"/>
    </location>
    <ligand>
        <name>Zn(2+)</name>
        <dbReference type="ChEBI" id="CHEBI:29105"/>
        <label>1</label>
    </ligand>
</feature>
<feature type="binding site" evidence="1">
    <location>
        <position position="66"/>
    </location>
    <ligand>
        <name>Zn(2+)</name>
        <dbReference type="ChEBI" id="CHEBI:29105"/>
        <label>1</label>
    </ligand>
</feature>
<feature type="binding site" evidence="1">
    <location>
        <position position="68"/>
    </location>
    <ligand>
        <name>Zn(2+)</name>
        <dbReference type="ChEBI" id="CHEBI:29105"/>
        <label>2</label>
    </ligand>
</feature>
<feature type="binding site" evidence="1">
    <location>
        <position position="69"/>
    </location>
    <ligand>
        <name>Zn(2+)</name>
        <dbReference type="ChEBI" id="CHEBI:29105"/>
        <label>2</label>
    </ligand>
</feature>
<feature type="binding site" evidence="1">
    <location>
        <position position="143"/>
    </location>
    <ligand>
        <name>Zn(2+)</name>
        <dbReference type="ChEBI" id="CHEBI:29105"/>
        <label>1</label>
    </ligand>
</feature>
<feature type="binding site" evidence="1">
    <location>
        <position position="162"/>
    </location>
    <ligand>
        <name>Zn(2+)</name>
        <dbReference type="ChEBI" id="CHEBI:29105"/>
        <label>1</label>
    </ligand>
</feature>
<feature type="binding site" evidence="1">
    <location>
        <position position="162"/>
    </location>
    <ligand>
        <name>Zn(2+)</name>
        <dbReference type="ChEBI" id="CHEBI:29105"/>
        <label>2</label>
    </ligand>
</feature>
<feature type="binding site" evidence="1">
    <location>
        <position position="212"/>
    </location>
    <ligand>
        <name>Zn(2+)</name>
        <dbReference type="ChEBI" id="CHEBI:29105"/>
        <label>2</label>
    </ligand>
</feature>
<name>YOBT_BACSU</name>
<protein>
    <recommendedName>
        <fullName>Uncharacterized protein YobT</fullName>
        <ecNumber>3.-.-.-</ecNumber>
    </recommendedName>
</protein>
<organism>
    <name type="scientific">Bacillus subtilis (strain 168)</name>
    <dbReference type="NCBI Taxonomy" id="224308"/>
    <lineage>
        <taxon>Bacteria</taxon>
        <taxon>Bacillati</taxon>
        <taxon>Bacillota</taxon>
        <taxon>Bacilli</taxon>
        <taxon>Bacillales</taxon>
        <taxon>Bacillaceae</taxon>
        <taxon>Bacillus</taxon>
    </lineage>
</organism>
<dbReference type="EC" id="3.-.-.-"/>
<dbReference type="EMBL" id="AF027868">
    <property type="protein sequence ID" value="AAB84470.1"/>
    <property type="molecule type" value="Genomic_DNA"/>
</dbReference>
<dbReference type="EMBL" id="AL009126">
    <property type="protein sequence ID" value="CAB13800.1"/>
    <property type="molecule type" value="Genomic_DNA"/>
</dbReference>
<dbReference type="PIR" id="B69900">
    <property type="entry name" value="B69900"/>
</dbReference>
<dbReference type="RefSeq" id="NP_389789.1">
    <property type="nucleotide sequence ID" value="NC_000964.3"/>
</dbReference>
<dbReference type="RefSeq" id="WP_003231294.1">
    <property type="nucleotide sequence ID" value="NZ_OZ025638.1"/>
</dbReference>
<dbReference type="SMR" id="O34910"/>
<dbReference type="FunCoup" id="O34910">
    <property type="interactions" value="5"/>
</dbReference>
<dbReference type="STRING" id="224308.BSU19080"/>
<dbReference type="PaxDb" id="224308-BSU19080"/>
<dbReference type="EnsemblBacteria" id="CAB13800">
    <property type="protein sequence ID" value="CAB13800"/>
    <property type="gene ID" value="BSU_19080"/>
</dbReference>
<dbReference type="GeneID" id="939645"/>
<dbReference type="KEGG" id="bsu:BSU19080"/>
<dbReference type="PATRIC" id="fig|224308.179.peg.2086"/>
<dbReference type="eggNOG" id="COG0491">
    <property type="taxonomic scope" value="Bacteria"/>
</dbReference>
<dbReference type="InParanoid" id="O34910"/>
<dbReference type="OrthoDB" id="9802248at2"/>
<dbReference type="PhylomeDB" id="O34910"/>
<dbReference type="BioCyc" id="BSUB:BSU19080-MONOMER"/>
<dbReference type="Proteomes" id="UP000001570">
    <property type="component" value="Chromosome"/>
</dbReference>
<dbReference type="GO" id="GO:0016787">
    <property type="term" value="F:hydrolase activity"/>
    <property type="evidence" value="ECO:0007669"/>
    <property type="project" value="UniProtKB-KW"/>
</dbReference>
<dbReference type="GO" id="GO:0046872">
    <property type="term" value="F:metal ion binding"/>
    <property type="evidence" value="ECO:0007669"/>
    <property type="project" value="UniProtKB-KW"/>
</dbReference>
<dbReference type="CDD" id="cd07721">
    <property type="entry name" value="yflN-like_MBL-fold"/>
    <property type="match status" value="1"/>
</dbReference>
<dbReference type="Gene3D" id="3.60.15.10">
    <property type="entry name" value="Ribonuclease Z/Hydroxyacylglutathione hydrolase-like"/>
    <property type="match status" value="1"/>
</dbReference>
<dbReference type="InterPro" id="IPR001279">
    <property type="entry name" value="Metallo-B-lactamas"/>
</dbReference>
<dbReference type="InterPro" id="IPR050855">
    <property type="entry name" value="NDM-1-like"/>
</dbReference>
<dbReference type="InterPro" id="IPR036866">
    <property type="entry name" value="RibonucZ/Hydroxyglut_hydro"/>
</dbReference>
<dbReference type="PANTHER" id="PTHR42951:SF9">
    <property type="entry name" value="METAL-DEPENDENT HYDROLASE"/>
    <property type="match status" value="1"/>
</dbReference>
<dbReference type="PANTHER" id="PTHR42951">
    <property type="entry name" value="METALLO-BETA-LACTAMASE DOMAIN-CONTAINING"/>
    <property type="match status" value="1"/>
</dbReference>
<dbReference type="Pfam" id="PF00753">
    <property type="entry name" value="Lactamase_B"/>
    <property type="match status" value="1"/>
</dbReference>
<dbReference type="SMART" id="SM00849">
    <property type="entry name" value="Lactamase_B"/>
    <property type="match status" value="1"/>
</dbReference>
<dbReference type="SUPFAM" id="SSF56281">
    <property type="entry name" value="Metallo-hydrolase/oxidoreductase"/>
    <property type="match status" value="1"/>
</dbReference>
<sequence length="233" mass="25397">MRITQYQTVWQLTFFPALFPVNCYLVEEENEVTLIDAALPGSYKGIIQAVNQLGKPLQHILLTHAHGDHVGSLDTLAQTFPHAKVMISERDSFLLQGDTSLRQDEPQTPIKGGIPKHIQTKPHQLLTGGETIGSLLAIPTPGHTPGSMSFLDTRNGTLIAGDAFQLRGGIAVSGQIKWAFPFPAFATWNKEEAIKSAQLLADKAPSCLAVGHGKFLRSPSERMRQAIQKAKKG</sequence>
<keyword id="KW-0378">Hydrolase</keyword>
<keyword id="KW-0479">Metal-binding</keyword>
<keyword id="KW-1185">Reference proteome</keyword>
<keyword id="KW-0862">Zinc</keyword>
<accession>O34910</accession>
<accession>Q796D5</accession>